<feature type="chain" id="PRO_0000034530" description="Tumor necrosis factor ligand superfamily member 13b, membrane form">
    <location>
        <begin position="1"/>
        <end position="309"/>
    </location>
</feature>
<feature type="chain" id="PRO_0000034531" description="Tumor necrosis factor ligand superfamily member 13b, soluble form">
    <location>
        <begin position="127"/>
        <end position="309"/>
    </location>
</feature>
<feature type="topological domain" description="Cytoplasmic" evidence="2">
    <location>
        <begin position="1"/>
        <end position="47"/>
    </location>
</feature>
<feature type="transmembrane region" description="Helical; Signal-anchor for type II membrane protein" evidence="2">
    <location>
        <begin position="48"/>
        <end position="68"/>
    </location>
</feature>
<feature type="topological domain" description="Extracellular" evidence="2">
    <location>
        <begin position="69"/>
        <end position="309"/>
    </location>
</feature>
<feature type="domain" description="THD" evidence="3">
    <location>
        <begin position="169"/>
        <end position="308"/>
    </location>
</feature>
<feature type="region of interest" description="Disordered" evidence="4">
    <location>
        <begin position="110"/>
        <end position="140"/>
    </location>
</feature>
<feature type="compositionally biased region" description="Basic residues" evidence="4">
    <location>
        <begin position="117"/>
        <end position="126"/>
    </location>
</feature>
<feature type="site" description="Cleavage" evidence="1">
    <location>
        <begin position="126"/>
        <end position="127"/>
    </location>
</feature>
<feature type="glycosylation site" description="N-linked (GlcNAc...) asparagine" evidence="2">
    <location>
        <position position="117"/>
    </location>
</feature>
<feature type="glycosylation site" description="N-linked (GlcNAc...) asparagine" evidence="2">
    <location>
        <position position="266"/>
    </location>
</feature>
<feature type="disulfide bond" evidence="3">
    <location>
        <begin position="256"/>
        <end position="269"/>
    </location>
</feature>
<feature type="splice variant" id="VSP_041184" description="In isoform 2." evidence="7 8">
    <original>IIQDCLQLIADSDTPTIRKG</original>
    <variation>R</variation>
    <location>
        <begin position="166"/>
        <end position="185"/>
    </location>
</feature>
<feature type="sequence variant" description="In strain: NZB." evidence="5">
    <original>N</original>
    <variation>S</variation>
    <location>
        <position position="79"/>
    </location>
</feature>
<organism>
    <name type="scientific">Mus musculus</name>
    <name type="common">Mouse</name>
    <dbReference type="NCBI Taxonomy" id="10090"/>
    <lineage>
        <taxon>Eukaryota</taxon>
        <taxon>Metazoa</taxon>
        <taxon>Chordata</taxon>
        <taxon>Craniata</taxon>
        <taxon>Vertebrata</taxon>
        <taxon>Euteleostomi</taxon>
        <taxon>Mammalia</taxon>
        <taxon>Eutheria</taxon>
        <taxon>Euarchontoglires</taxon>
        <taxon>Glires</taxon>
        <taxon>Rodentia</taxon>
        <taxon>Myomorpha</taxon>
        <taxon>Muroidea</taxon>
        <taxon>Muridae</taxon>
        <taxon>Murinae</taxon>
        <taxon>Mus</taxon>
        <taxon>Mus</taxon>
    </lineage>
</organism>
<accession>Q9WU72</accession>
<accession>Q7TQ58</accession>
<evidence type="ECO:0000250" key="1"/>
<evidence type="ECO:0000255" key="2"/>
<evidence type="ECO:0000255" key="3">
    <source>
        <dbReference type="PROSITE-ProRule" id="PRU01387"/>
    </source>
</evidence>
<evidence type="ECO:0000256" key="4">
    <source>
        <dbReference type="SAM" id="MobiDB-lite"/>
    </source>
</evidence>
<evidence type="ECO:0000269" key="5">
    <source>
    </source>
</evidence>
<evidence type="ECO:0000269" key="6">
    <source>
    </source>
</evidence>
<evidence type="ECO:0000303" key="7">
    <source>
    </source>
</evidence>
<evidence type="ECO:0000303" key="8">
    <source>
    </source>
</evidence>
<evidence type="ECO:0000305" key="9"/>
<proteinExistence type="evidence at protein level"/>
<protein>
    <recommendedName>
        <fullName>Tumor necrosis factor ligand superfamily member 13B</fullName>
    </recommendedName>
    <alternativeName>
        <fullName>B-cell-activating factor</fullName>
    </alternativeName>
    <alternativeName>
        <fullName>BAFF</fullName>
    </alternativeName>
    <cdAntigenName>CD257</cdAntigenName>
    <component>
        <recommendedName>
            <fullName>Tumor necrosis factor ligand superfamily member 13b, membrane form</fullName>
        </recommendedName>
    </component>
    <component>
        <recommendedName>
            <fullName>Tumor necrosis factor ligand superfamily member 13b, soluble form</fullName>
        </recommendedName>
    </component>
</protein>
<dbReference type="EMBL" id="AF119383">
    <property type="protein sequence ID" value="AAD22475.1"/>
    <property type="molecule type" value="mRNA"/>
</dbReference>
<dbReference type="EMBL" id="AF352245">
    <property type="protein sequence ID" value="AAL83939.1"/>
    <property type="molecule type" value="mRNA"/>
</dbReference>
<dbReference type="EMBL" id="AY290823">
    <property type="protein sequence ID" value="AAP82036.1"/>
    <property type="molecule type" value="mRNA"/>
</dbReference>
<dbReference type="EMBL" id="CH466566">
    <property type="protein sequence ID" value="EDL22044.1"/>
    <property type="molecule type" value="Genomic_DNA"/>
</dbReference>
<dbReference type="EMBL" id="BC106840">
    <property type="protein sequence ID" value="AAI06841.1"/>
    <property type="molecule type" value="mRNA"/>
</dbReference>
<dbReference type="CCDS" id="CCDS22094.1">
    <molecule id="Q9WU72-1"/>
</dbReference>
<dbReference type="CCDS" id="CCDS85498.1">
    <molecule id="Q9WU72-2"/>
</dbReference>
<dbReference type="RefSeq" id="NP_001334238.1">
    <molecule id="Q9WU72-2"/>
    <property type="nucleotide sequence ID" value="NM_001347309.2"/>
</dbReference>
<dbReference type="RefSeq" id="NP_296371.1">
    <molecule id="Q9WU72-1"/>
    <property type="nucleotide sequence ID" value="NM_033622.3"/>
</dbReference>
<dbReference type="SMR" id="Q9WU72"/>
<dbReference type="BioGRID" id="204896">
    <property type="interactions" value="2"/>
</dbReference>
<dbReference type="FunCoup" id="Q9WU72">
    <property type="interactions" value="683"/>
</dbReference>
<dbReference type="STRING" id="10090.ENSMUSP00000146694"/>
<dbReference type="GlyCosmos" id="Q9WU72">
    <property type="glycosylation" value="2 sites, No reported glycans"/>
</dbReference>
<dbReference type="GlyGen" id="Q9WU72">
    <property type="glycosylation" value="2 sites"/>
</dbReference>
<dbReference type="iPTMnet" id="Q9WU72"/>
<dbReference type="PhosphoSitePlus" id="Q9WU72"/>
<dbReference type="PaxDb" id="10090-ENSMUSP00000033892"/>
<dbReference type="ProteomicsDB" id="260715">
    <molecule id="Q9WU72-1"/>
</dbReference>
<dbReference type="ProteomicsDB" id="260716">
    <molecule id="Q9WU72-2"/>
</dbReference>
<dbReference type="ABCD" id="Q9WU72">
    <property type="antibodies" value="24 sequenced antibodies"/>
</dbReference>
<dbReference type="Antibodypedia" id="3364">
    <property type="antibodies" value="1685 antibodies from 49 providers"/>
</dbReference>
<dbReference type="DNASU" id="24099"/>
<dbReference type="Ensembl" id="ENSMUST00000033892.9">
    <molecule id="Q9WU72-2"/>
    <property type="protein sequence ID" value="ENSMUSP00000033892.9"/>
    <property type="gene ID" value="ENSMUSG00000031497.11"/>
</dbReference>
<dbReference type="Ensembl" id="ENSMUST00000207792.3">
    <molecule id="Q9WU72-1"/>
    <property type="protein sequence ID" value="ENSMUSP00000146694.2"/>
    <property type="gene ID" value="ENSMUSG00000031497.11"/>
</dbReference>
<dbReference type="GeneID" id="24099"/>
<dbReference type="KEGG" id="mmu:24099"/>
<dbReference type="UCSC" id="uc009kup.1">
    <molecule id="Q9WU72-1"/>
    <property type="organism name" value="mouse"/>
</dbReference>
<dbReference type="UCSC" id="uc009kuq.1">
    <molecule id="Q9WU72-2"/>
    <property type="organism name" value="mouse"/>
</dbReference>
<dbReference type="AGR" id="MGI:1344376"/>
<dbReference type="CTD" id="10673"/>
<dbReference type="MGI" id="MGI:1344376">
    <property type="gene designation" value="Tnfsf13b"/>
</dbReference>
<dbReference type="VEuPathDB" id="HostDB:ENSMUSG00000031497"/>
<dbReference type="eggNOG" id="ENOG502RX35">
    <property type="taxonomic scope" value="Eukaryota"/>
</dbReference>
<dbReference type="GeneTree" id="ENSGT00940000157536"/>
<dbReference type="HOGENOM" id="CLU_063693_0_0_1"/>
<dbReference type="InParanoid" id="Q9WU72"/>
<dbReference type="OMA" id="MTRVECL"/>
<dbReference type="OrthoDB" id="5947373at2759"/>
<dbReference type="PhylomeDB" id="Q9WU72"/>
<dbReference type="TreeFam" id="TF332331"/>
<dbReference type="Reactome" id="R-MMU-5668541">
    <property type="pathway name" value="TNFR2 non-canonical NF-kB pathway"/>
</dbReference>
<dbReference type="Reactome" id="R-MMU-5669034">
    <property type="pathway name" value="TNFs bind their physiological receptors"/>
</dbReference>
<dbReference type="Reactome" id="R-MMU-5676594">
    <property type="pathway name" value="TNF receptor superfamily (TNFSF) members mediating non-canonical NF-kB pathway"/>
</dbReference>
<dbReference type="BioGRID-ORCS" id="24099">
    <property type="hits" value="1 hit in 63 CRISPR screens"/>
</dbReference>
<dbReference type="ChiTaRS" id="Tnfsf13b">
    <property type="organism name" value="mouse"/>
</dbReference>
<dbReference type="PRO" id="PR:Q9WU72"/>
<dbReference type="Proteomes" id="UP000000589">
    <property type="component" value="Chromosome 8"/>
</dbReference>
<dbReference type="RNAct" id="Q9WU72">
    <property type="molecule type" value="protein"/>
</dbReference>
<dbReference type="Bgee" id="ENSMUSG00000031497">
    <property type="expression patterns" value="Expressed in granulocyte and 131 other cell types or tissues"/>
</dbReference>
<dbReference type="ExpressionAtlas" id="Q9WU72">
    <property type="expression patterns" value="baseline and differential"/>
</dbReference>
<dbReference type="GO" id="GO:0005615">
    <property type="term" value="C:extracellular space"/>
    <property type="evidence" value="ECO:0007669"/>
    <property type="project" value="UniProtKB-KW"/>
</dbReference>
<dbReference type="GO" id="GO:0005925">
    <property type="term" value="C:focal adhesion"/>
    <property type="evidence" value="ECO:0007669"/>
    <property type="project" value="Ensembl"/>
</dbReference>
<dbReference type="GO" id="GO:0043231">
    <property type="term" value="C:intracellular membrane-bounded organelle"/>
    <property type="evidence" value="ECO:0007669"/>
    <property type="project" value="Ensembl"/>
</dbReference>
<dbReference type="GO" id="GO:0048471">
    <property type="term" value="C:perinuclear region of cytoplasm"/>
    <property type="evidence" value="ECO:0007669"/>
    <property type="project" value="Ensembl"/>
</dbReference>
<dbReference type="GO" id="GO:0005886">
    <property type="term" value="C:plasma membrane"/>
    <property type="evidence" value="ECO:0007669"/>
    <property type="project" value="UniProtKB-SubCell"/>
</dbReference>
<dbReference type="GO" id="GO:0005125">
    <property type="term" value="F:cytokine activity"/>
    <property type="evidence" value="ECO:0007669"/>
    <property type="project" value="UniProtKB-KW"/>
</dbReference>
<dbReference type="GO" id="GO:0005164">
    <property type="term" value="F:tumor necrosis factor receptor binding"/>
    <property type="evidence" value="ECO:0007669"/>
    <property type="project" value="InterPro"/>
</dbReference>
<dbReference type="GO" id="GO:0031296">
    <property type="term" value="P:B cell costimulation"/>
    <property type="evidence" value="ECO:0000314"/>
    <property type="project" value="MGI"/>
</dbReference>
<dbReference type="GO" id="GO:0030183">
    <property type="term" value="P:B cell differentiation"/>
    <property type="evidence" value="ECO:0000315"/>
    <property type="project" value="MGI"/>
</dbReference>
<dbReference type="GO" id="GO:0001782">
    <property type="term" value="P:B cell homeostasis"/>
    <property type="evidence" value="ECO:0000315"/>
    <property type="project" value="MGI"/>
</dbReference>
<dbReference type="GO" id="GO:0042100">
    <property type="term" value="P:B cell proliferation"/>
    <property type="evidence" value="ECO:0000314"/>
    <property type="project" value="MGI"/>
</dbReference>
<dbReference type="GO" id="GO:0002467">
    <property type="term" value="P:germinal center formation"/>
    <property type="evidence" value="ECO:0000315"/>
    <property type="project" value="MGI"/>
</dbReference>
<dbReference type="GO" id="GO:0030890">
    <property type="term" value="P:positive regulation of B cell proliferation"/>
    <property type="evidence" value="ECO:0000314"/>
    <property type="project" value="MGI"/>
</dbReference>
<dbReference type="GO" id="GO:0002636">
    <property type="term" value="P:positive regulation of germinal center formation"/>
    <property type="evidence" value="ECO:0000315"/>
    <property type="project" value="MGI"/>
</dbReference>
<dbReference type="GO" id="GO:0042102">
    <property type="term" value="P:positive regulation of T cell proliferation"/>
    <property type="evidence" value="ECO:0000314"/>
    <property type="project" value="MGI"/>
</dbReference>
<dbReference type="GO" id="GO:0050776">
    <property type="term" value="P:regulation of immune response"/>
    <property type="evidence" value="ECO:0000315"/>
    <property type="project" value="MGI"/>
</dbReference>
<dbReference type="GO" id="GO:0043588">
    <property type="term" value="P:skin development"/>
    <property type="evidence" value="ECO:0000315"/>
    <property type="project" value="MGI"/>
</dbReference>
<dbReference type="GO" id="GO:0031295">
    <property type="term" value="P:T cell costimulation"/>
    <property type="evidence" value="ECO:0000314"/>
    <property type="project" value="MGI"/>
</dbReference>
<dbReference type="GO" id="GO:0042098">
    <property type="term" value="P:T cell proliferation"/>
    <property type="evidence" value="ECO:0000314"/>
    <property type="project" value="MGI"/>
</dbReference>
<dbReference type="GO" id="GO:0002333">
    <property type="term" value="P:transitional one stage B cell differentiation"/>
    <property type="evidence" value="ECO:0000315"/>
    <property type="project" value="MGI"/>
</dbReference>
<dbReference type="GO" id="GO:0033209">
    <property type="term" value="P:tumor necrosis factor-mediated signaling pathway"/>
    <property type="evidence" value="ECO:0000316"/>
    <property type="project" value="MGI"/>
</dbReference>
<dbReference type="CDD" id="cd00184">
    <property type="entry name" value="TNF"/>
    <property type="match status" value="1"/>
</dbReference>
<dbReference type="Gene3D" id="2.60.120.40">
    <property type="match status" value="1"/>
</dbReference>
<dbReference type="InterPro" id="IPR006052">
    <property type="entry name" value="TNF_dom"/>
</dbReference>
<dbReference type="InterPro" id="IPR051748">
    <property type="entry name" value="TNF_Ligand_Superfamily"/>
</dbReference>
<dbReference type="InterPro" id="IPR008983">
    <property type="entry name" value="Tumour_necrosis_fac-like_dom"/>
</dbReference>
<dbReference type="PANTHER" id="PTHR15151">
    <property type="entry name" value="PROTEIN EIGER"/>
    <property type="match status" value="1"/>
</dbReference>
<dbReference type="PANTHER" id="PTHR15151:SF2">
    <property type="entry name" value="TUMOR NECROSIS FACTOR LIGAND SUPERFAMILY MEMBER 13B"/>
    <property type="match status" value="1"/>
</dbReference>
<dbReference type="Pfam" id="PF00229">
    <property type="entry name" value="TNF"/>
    <property type="match status" value="1"/>
</dbReference>
<dbReference type="SUPFAM" id="SSF49842">
    <property type="entry name" value="TNF-like"/>
    <property type="match status" value="1"/>
</dbReference>
<dbReference type="PROSITE" id="PS50049">
    <property type="entry name" value="THD_2"/>
    <property type="match status" value="1"/>
</dbReference>
<name>TN13B_MOUSE</name>
<keyword id="KW-0025">Alternative splicing</keyword>
<keyword id="KW-1003">Cell membrane</keyword>
<keyword id="KW-0165">Cleavage on pair of basic residues</keyword>
<keyword id="KW-0202">Cytokine</keyword>
<keyword id="KW-1015">Disulfide bond</keyword>
<keyword id="KW-0325">Glycoprotein</keyword>
<keyword id="KW-0472">Membrane</keyword>
<keyword id="KW-1185">Reference proteome</keyword>
<keyword id="KW-0964">Secreted</keyword>
<keyword id="KW-0735">Signal-anchor</keyword>
<keyword id="KW-0812">Transmembrane</keyword>
<keyword id="KW-1133">Transmembrane helix</keyword>
<gene>
    <name type="primary">Tnfsf13b</name>
    <name type="synonym">Baff</name>
</gene>
<sequence length="309" mass="34192">MDESAKTLPPPCLCFCSEKGEDMKVGYDPITPQKEEGAWFGICRDGRLLAATLLLALLSSSFTAMSLYQLAALQADLMNLRMELQSYRGSATPAAAGAPELTAGVKLLTPAAPRPHNSSRGHRNRRAFQGPEETEQDVDLSAPPAPCLPGCRHSQHDDNGMNLRNIIQDCLQLIADSDTPTIRKGTYTFVPWLLSFKRGNALEEKENKIVVRQTGYFFIYSQVLYTDPIFAMGHVIQRKKVHVFGDELSLVTLFRCIQNMPKTLPNNSCYSAGIARLEEGDEIQLAIPRENAQISRNGDDTFFGALKLL</sequence>
<comment type="function">
    <text evidence="6">Cytokine that binds to TNFRSF13B/TACI and TNFRSF17/BCMA. TNFSF13/APRIL binds to the same 2 receptors. Together, they form a 2 ligands -2 receptors pathway involved in the stimulation of B- and T-cell function and the regulation of humoral immunity. A third B-cell specific BAFF-receptor (BAFFR/BR3) promotes the survival of mature B-cells and the B-cell response.</text>
</comment>
<comment type="function">
    <text evidence="6">Isoform 2 seems to inhibit isoform 1 secretion and bioactivity.</text>
</comment>
<comment type="subunit">
    <text evidence="6">Homotrimer. Isoform 2 heteromultimerizes with isoform 1, probably limiting the amount of functional isoform 1 on the cell surface.</text>
</comment>
<comment type="subcellular location">
    <subcellularLocation>
        <location>Cell membrane</location>
        <topology>Single-pass type II membrane protein</topology>
    </subcellularLocation>
</comment>
<comment type="subcellular location">
    <molecule>Tumor necrosis factor ligand superfamily member 13b, soluble form</molecule>
    <subcellularLocation>
        <location>Secreted</location>
    </subcellularLocation>
</comment>
<comment type="alternative products">
    <event type="alternative splicing"/>
    <isoform>
        <id>Q9WU72-1</id>
        <name>1</name>
        <sequence type="displayed"/>
    </isoform>
    <isoform>
        <id>Q9WU72-2</id>
        <name>2</name>
        <name>DeltaBAFF</name>
        <sequence type="described" ref="VSP_041184"/>
    </isoform>
</comment>
<comment type="tissue specificity">
    <text evidence="6">Isoform 2 is expressed in many myeloid cell lines.</text>
</comment>
<comment type="PTM">
    <text>The soluble form derives from the membrane form by proteolytic processing.</text>
</comment>
<comment type="PTM">
    <text>Isoform 2 is not efficiently shed from the membrane unlike isoform 1.</text>
</comment>
<comment type="similarity">
    <text evidence="9">Belongs to the tumor necrosis factor family.</text>
</comment>
<reference key="1">
    <citation type="journal article" date="1999" name="J. Exp. Med.">
        <title>BAFF, a novel ligand of the tumor necrosis factor family, stimulates B cell growth.</title>
        <authorList>
            <person name="Schneider P."/>
            <person name="MacKay F."/>
            <person name="Steiner V."/>
            <person name="Hofmann K."/>
            <person name="Bodmer J.-L."/>
            <person name="Holler N."/>
            <person name="Ambrose C."/>
            <person name="Lawton P."/>
            <person name="Bixler S."/>
            <person name="Acha-Orbea H."/>
            <person name="Valmori D."/>
            <person name="Romero P."/>
            <person name="Werner-Favre C."/>
            <person name="Zubler R.H."/>
            <person name="Browning J.L."/>
            <person name="Tschopp J."/>
        </authorList>
    </citation>
    <scope>NUCLEOTIDE SEQUENCE [MRNA] (ISOFORM 1)</scope>
</reference>
<reference key="2">
    <citation type="journal article" date="2001" name="Immunogenetics">
        <title>Polymorphism and chromosomal mapping of the mouse gene for B-cell activating factor belonging to the tumor necrosis factor family (Baff) and association with the autoimmune phenotype.</title>
        <authorList>
            <person name="Jiang Y."/>
            <person name="Ohtsuji M."/>
            <person name="Abe M."/>
            <person name="Li N."/>
            <person name="Xiu Y."/>
            <person name="Wen X.S."/>
            <person name="Shirai T."/>
            <person name="Hirose S."/>
        </authorList>
    </citation>
    <scope>NUCLEOTIDE SEQUENCE [MRNA] (ISOFORM 1)</scope>
    <scope>VARIANT SER-79</scope>
    <source>
        <strain>NZB</strain>
    </source>
</reference>
<reference key="3">
    <citation type="journal article" date="2003" name="J. Biol. Chem.">
        <title>DeltaBAFF, an alternate splice isoform that regulates receptor binding and biopresentation of the B cell survival cytokine, BAFF.</title>
        <authorList>
            <person name="Gavin A.L."/>
            <person name="Ait-Azzouzene D."/>
            <person name="Ware C.F."/>
            <person name="Nemazee D."/>
        </authorList>
    </citation>
    <scope>NUCLEOTIDE SEQUENCE [MRNA] (ISOFORM 2)</scope>
    <scope>TISSUE SPECIFICITY</scope>
    <scope>FUNCTION</scope>
    <scope>POST-TRANSLATIONAL MODIFICATION</scope>
    <scope>SUBUNIT</scope>
    <source>
        <strain>BALB/cJ</strain>
    </source>
</reference>
<reference key="4">
    <citation type="submission" date="2005-07" db="EMBL/GenBank/DDBJ databases">
        <authorList>
            <person name="Mural R.J."/>
            <person name="Adams M.D."/>
            <person name="Myers E.W."/>
            <person name="Smith H.O."/>
            <person name="Venter J.C."/>
        </authorList>
    </citation>
    <scope>NUCLEOTIDE SEQUENCE [LARGE SCALE GENOMIC DNA]</scope>
</reference>
<reference key="5">
    <citation type="journal article" date="2004" name="Genome Res.">
        <title>The status, quality, and expansion of the NIH full-length cDNA project: the Mammalian Gene Collection (MGC).</title>
        <authorList>
            <consortium name="The MGC Project Team"/>
        </authorList>
    </citation>
    <scope>NUCLEOTIDE SEQUENCE [LARGE SCALE MRNA] (ISOFORM 2)</scope>
</reference>